<feature type="chain" id="PRO_0000150791" description="Olfactory receptor 52R1">
    <location>
        <begin position="1"/>
        <end position="315"/>
    </location>
</feature>
<feature type="topological domain" description="Extracellular" evidence="1">
    <location>
        <begin position="1"/>
        <end position="28"/>
    </location>
</feature>
<feature type="transmembrane region" description="Helical; Name=1" evidence="1">
    <location>
        <begin position="29"/>
        <end position="49"/>
    </location>
</feature>
<feature type="topological domain" description="Cytoplasmic" evidence="1">
    <location>
        <begin position="50"/>
        <end position="57"/>
    </location>
</feature>
<feature type="transmembrane region" description="Helical; Name=2" evidence="1">
    <location>
        <begin position="58"/>
        <end position="78"/>
    </location>
</feature>
<feature type="topological domain" description="Extracellular" evidence="1">
    <location>
        <begin position="79"/>
        <end position="102"/>
    </location>
</feature>
<feature type="transmembrane region" description="Helical; Name=3" evidence="1">
    <location>
        <begin position="103"/>
        <end position="123"/>
    </location>
</feature>
<feature type="topological domain" description="Cytoplasmic" evidence="1">
    <location>
        <begin position="124"/>
        <end position="142"/>
    </location>
</feature>
<feature type="transmembrane region" description="Helical; Name=4" evidence="1">
    <location>
        <begin position="143"/>
        <end position="163"/>
    </location>
</feature>
<feature type="topological domain" description="Extracellular" evidence="1">
    <location>
        <begin position="164"/>
        <end position="199"/>
    </location>
</feature>
<feature type="transmembrane region" description="Helical; Name=5" evidence="1">
    <location>
        <begin position="200"/>
        <end position="220"/>
    </location>
</feature>
<feature type="topological domain" description="Cytoplasmic" evidence="1">
    <location>
        <begin position="221"/>
        <end position="240"/>
    </location>
</feature>
<feature type="transmembrane region" description="Helical; Name=6" evidence="1">
    <location>
        <begin position="241"/>
        <end position="261"/>
    </location>
</feature>
<feature type="topological domain" description="Extracellular" evidence="1">
    <location>
        <begin position="262"/>
        <end position="276"/>
    </location>
</feature>
<feature type="transmembrane region" description="Helical; Name=7" evidence="1">
    <location>
        <begin position="277"/>
        <end position="297"/>
    </location>
</feature>
<feature type="topological domain" description="Cytoplasmic" evidence="1">
    <location>
        <begin position="298"/>
        <end position="315"/>
    </location>
</feature>
<feature type="glycosylation site" description="N-linked (GlcNAc...) asparagine" evidence="1">
    <location>
        <position position="7"/>
    </location>
</feature>
<feature type="disulfide bond" evidence="2">
    <location>
        <begin position="100"/>
        <end position="192"/>
    </location>
</feature>
<feature type="sequence variant" id="VAR_059061" description="In dbSNP:rs17327254.">
    <original>F</original>
    <variation>L</variation>
    <location>
        <position position="88"/>
    </location>
</feature>
<feature type="sequence variant" id="VAR_059062" description="In dbSNP:rs7941731." evidence="3 4">
    <original>I</original>
    <variation>T</variation>
    <location>
        <position position="129"/>
    </location>
</feature>
<feature type="sequence variant" id="VAR_059063" description="In dbSNP:rs6578533." evidence="3 4">
    <original>N</original>
    <variation>Y</variation>
    <location>
        <position position="201"/>
    </location>
</feature>
<feature type="sequence variant" id="VAR_059064" description="In dbSNP:rs2053116." evidence="3 4">
    <original>S</original>
    <variation>A</variation>
    <location>
        <position position="245"/>
    </location>
</feature>
<protein>
    <recommendedName>
        <fullName>Olfactory receptor 52R1</fullName>
    </recommendedName>
    <alternativeName>
        <fullName>Olfactory receptor OR11-22</fullName>
    </alternativeName>
</protein>
<proteinExistence type="inferred from homology"/>
<name>O52R1_HUMAN</name>
<evidence type="ECO:0000255" key="1"/>
<evidence type="ECO:0000255" key="2">
    <source>
        <dbReference type="PROSITE-ProRule" id="PRU00521"/>
    </source>
</evidence>
<evidence type="ECO:0000269" key="3">
    <source>
    </source>
</evidence>
<evidence type="ECO:0000269" key="4">
    <source ref="1"/>
</evidence>
<evidence type="ECO:0000305" key="5"/>
<organism>
    <name type="scientific">Homo sapiens</name>
    <name type="common">Human</name>
    <dbReference type="NCBI Taxonomy" id="9606"/>
    <lineage>
        <taxon>Eukaryota</taxon>
        <taxon>Metazoa</taxon>
        <taxon>Chordata</taxon>
        <taxon>Craniata</taxon>
        <taxon>Vertebrata</taxon>
        <taxon>Euteleostomi</taxon>
        <taxon>Mammalia</taxon>
        <taxon>Eutheria</taxon>
        <taxon>Euarchontoglires</taxon>
        <taxon>Primates</taxon>
        <taxon>Haplorrhini</taxon>
        <taxon>Catarrhini</taxon>
        <taxon>Hominidae</taxon>
        <taxon>Homo</taxon>
    </lineage>
</organism>
<dbReference type="EMBL" id="AB065857">
    <property type="protein sequence ID" value="BAC06075.1"/>
    <property type="molecule type" value="Genomic_DNA"/>
</dbReference>
<dbReference type="EMBL" id="AC103710">
    <property type="status" value="NOT_ANNOTATED_CDS"/>
    <property type="molecule type" value="Genomic_DNA"/>
</dbReference>
<dbReference type="EMBL" id="BK004282">
    <property type="protein sequence ID" value="DAA04680.1"/>
    <property type="status" value="ALT_INIT"/>
    <property type="molecule type" value="Genomic_DNA"/>
</dbReference>
<dbReference type="RefSeq" id="NP_001005177.3">
    <property type="nucleotide sequence ID" value="NM_001005177.3"/>
</dbReference>
<dbReference type="SMR" id="Q8NGF1"/>
<dbReference type="FunCoup" id="Q8NGF1">
    <property type="interactions" value="466"/>
</dbReference>
<dbReference type="STRING" id="9606.ENSP00000485292"/>
<dbReference type="GlyCosmos" id="Q8NGF1">
    <property type="glycosylation" value="1 site, No reported glycans"/>
</dbReference>
<dbReference type="GlyGen" id="Q8NGF1">
    <property type="glycosylation" value="1 site"/>
</dbReference>
<dbReference type="BioMuta" id="OR52R1"/>
<dbReference type="DMDM" id="223590113"/>
<dbReference type="MassIVE" id="Q8NGF1"/>
<dbReference type="PaxDb" id="9606-ENSP00000348368"/>
<dbReference type="Antibodypedia" id="78535">
    <property type="antibodies" value="23 antibodies from 10 providers"/>
</dbReference>
<dbReference type="DNASU" id="119695"/>
<dbReference type="Ensembl" id="ENST00000624978.1">
    <property type="protein sequence ID" value="ENSP00000485292.1"/>
    <property type="gene ID" value="ENSG00000279270.2"/>
</dbReference>
<dbReference type="GeneID" id="119695"/>
<dbReference type="KEGG" id="hsa:119695"/>
<dbReference type="MANE-Select" id="ENST00000624978.1">
    <property type="protein sequence ID" value="ENSP00000485292.1"/>
    <property type="RefSeq nucleotide sequence ID" value="NM_001005177.3"/>
    <property type="RefSeq protein sequence ID" value="NP_001005177.3"/>
</dbReference>
<dbReference type="UCSC" id="uc021qcs.1">
    <property type="organism name" value="human"/>
</dbReference>
<dbReference type="AGR" id="HGNC:15235"/>
<dbReference type="CTD" id="119695"/>
<dbReference type="GeneCards" id="OR52R1"/>
<dbReference type="HGNC" id="HGNC:15235">
    <property type="gene designation" value="OR52R1"/>
</dbReference>
<dbReference type="HPA" id="ENSG00000279270">
    <property type="expression patterns" value="Not detected"/>
</dbReference>
<dbReference type="neXtProt" id="NX_Q8NGF1"/>
<dbReference type="PharmGKB" id="PA32433"/>
<dbReference type="VEuPathDB" id="HostDB:ENSG00000279270"/>
<dbReference type="eggNOG" id="ENOG502QVH7">
    <property type="taxonomic scope" value="Eukaryota"/>
</dbReference>
<dbReference type="GeneTree" id="ENSGT01130000278278"/>
<dbReference type="HOGENOM" id="CLU_012526_0_0_1"/>
<dbReference type="InParanoid" id="Q8NGF1"/>
<dbReference type="OMA" id="MPFCQHQ"/>
<dbReference type="OrthoDB" id="6144443at2759"/>
<dbReference type="PAN-GO" id="Q8NGF1">
    <property type="GO annotations" value="0 GO annotations based on evolutionary models"/>
</dbReference>
<dbReference type="PhylomeDB" id="Q8NGF1"/>
<dbReference type="TreeFam" id="TF343679"/>
<dbReference type="PathwayCommons" id="Q8NGF1"/>
<dbReference type="Reactome" id="R-HSA-9752946">
    <property type="pathway name" value="Expression and translocation of olfactory receptors"/>
</dbReference>
<dbReference type="BioGRID-ORCS" id="119695">
    <property type="hits" value="8 hits in 729 CRISPR screens"/>
</dbReference>
<dbReference type="GeneWiki" id="OR52R1"/>
<dbReference type="GenomeRNAi" id="119695"/>
<dbReference type="Pharos" id="Q8NGF1">
    <property type="development level" value="Tdark"/>
</dbReference>
<dbReference type="PRO" id="PR:Q8NGF1"/>
<dbReference type="Proteomes" id="UP000005640">
    <property type="component" value="Chromosome 11"/>
</dbReference>
<dbReference type="RNAct" id="Q8NGF1">
    <property type="molecule type" value="protein"/>
</dbReference>
<dbReference type="Bgee" id="ENSG00000279270">
    <property type="expression patterns" value="Expressed in prostate gland"/>
</dbReference>
<dbReference type="GO" id="GO:0005886">
    <property type="term" value="C:plasma membrane"/>
    <property type="evidence" value="ECO:0000318"/>
    <property type="project" value="GO_Central"/>
</dbReference>
<dbReference type="GO" id="GO:0004930">
    <property type="term" value="F:G protein-coupled receptor activity"/>
    <property type="evidence" value="ECO:0007669"/>
    <property type="project" value="UniProtKB-KW"/>
</dbReference>
<dbReference type="GO" id="GO:0004984">
    <property type="term" value="F:olfactory receptor activity"/>
    <property type="evidence" value="ECO:0000318"/>
    <property type="project" value="GO_Central"/>
</dbReference>
<dbReference type="CDD" id="cd15951">
    <property type="entry name" value="7tmA_OR52R_52L-like"/>
    <property type="match status" value="1"/>
</dbReference>
<dbReference type="FunFam" id="1.20.1070.10:FF:000006">
    <property type="entry name" value="Olfactory receptor"/>
    <property type="match status" value="1"/>
</dbReference>
<dbReference type="Gene3D" id="1.20.1070.10">
    <property type="entry name" value="Rhodopsin 7-helix transmembrane proteins"/>
    <property type="match status" value="1"/>
</dbReference>
<dbReference type="InterPro" id="IPR000276">
    <property type="entry name" value="GPCR_Rhodpsn"/>
</dbReference>
<dbReference type="InterPro" id="IPR017452">
    <property type="entry name" value="GPCR_Rhodpsn_7TM"/>
</dbReference>
<dbReference type="InterPro" id="IPR000725">
    <property type="entry name" value="Olfact_rcpt"/>
</dbReference>
<dbReference type="InterPro" id="IPR050402">
    <property type="entry name" value="OR51/52/56-like"/>
</dbReference>
<dbReference type="PANTHER" id="PTHR26450:SF156">
    <property type="entry name" value="OLFACTORY RECEPTOR 52R1"/>
    <property type="match status" value="1"/>
</dbReference>
<dbReference type="PANTHER" id="PTHR26450">
    <property type="entry name" value="OLFACTORY RECEPTOR 56B1-RELATED"/>
    <property type="match status" value="1"/>
</dbReference>
<dbReference type="Pfam" id="PF13853">
    <property type="entry name" value="7tm_4"/>
    <property type="match status" value="1"/>
</dbReference>
<dbReference type="PRINTS" id="PR00237">
    <property type="entry name" value="GPCRRHODOPSN"/>
</dbReference>
<dbReference type="PRINTS" id="PR00245">
    <property type="entry name" value="OLFACTORYR"/>
</dbReference>
<dbReference type="SUPFAM" id="SSF81321">
    <property type="entry name" value="Family A G protein-coupled receptor-like"/>
    <property type="match status" value="1"/>
</dbReference>
<dbReference type="PROSITE" id="PS50262">
    <property type="entry name" value="G_PROTEIN_RECEP_F1_2"/>
    <property type="match status" value="1"/>
</dbReference>
<accession>Q8NGF1</accession>
<accession>Q6IFI0</accession>
<comment type="function">
    <text evidence="5">Odorant receptor.</text>
</comment>
<comment type="subcellular location">
    <subcellularLocation>
        <location>Cell membrane</location>
        <topology>Multi-pass membrane protein</topology>
    </subcellularLocation>
</comment>
<comment type="similarity">
    <text evidence="2">Belongs to the G-protein coupled receptor 1 family.</text>
</comment>
<comment type="sequence caution" evidence="5">
    <conflict type="erroneous initiation">
        <sequence resource="EMBL-CDS" id="DAA04680"/>
    </conflict>
</comment>
<comment type="online information" name="Human Olfactory Receptor Data Exploratorium (HORDE)">
    <link uri="http://genome.weizmann.ac.il/horde/card/index/symbol:OR52R1"/>
</comment>
<sequence>MVLASGNSSSHPVSFILLGIPGLESFQLWIAFPFCATYAVAVVGNITLLHVIRIDHTLHEPMYLFLAMLAITDLVLSSSTQPKMLAIFWFHAHEIQYHACLIQVFFIHAFSSVESGVLMAMALDCYVAICFPLRHSSILTPSVVIKLGTIVMLRGLLWVSPFCFMVSRMPFCQHQAIPQSYCEHMAVLKLVCADTSISRGNGLFVAFSVAGFDMIVIGMSYVMILRAVLQLPSGEARLKAFSTRSSHICVILALYIPALFSFLTYRFGHDVPRVVHILFANLYLLIPPMLNPIIYGVRTKQIGDRVIQGCCGNIP</sequence>
<gene>
    <name type="primary">OR52R1</name>
</gene>
<reference key="1">
    <citation type="submission" date="2001-07" db="EMBL/GenBank/DDBJ databases">
        <title>Genome-wide discovery and analysis of human seven transmembrane helix receptor genes.</title>
        <authorList>
            <person name="Suwa M."/>
            <person name="Sato T."/>
            <person name="Okouchi I."/>
            <person name="Arita M."/>
            <person name="Futami K."/>
            <person name="Matsumoto S."/>
            <person name="Tsutsumi S."/>
            <person name="Aburatani H."/>
            <person name="Asai K."/>
            <person name="Akiyama Y."/>
        </authorList>
    </citation>
    <scope>NUCLEOTIDE SEQUENCE [GENOMIC DNA]</scope>
    <scope>VARIANTS THR-129; TYR-201 AND ALA-245</scope>
</reference>
<reference key="2">
    <citation type="journal article" date="2006" name="Nature">
        <title>Human chromosome 11 DNA sequence and analysis including novel gene identification.</title>
        <authorList>
            <person name="Taylor T.D."/>
            <person name="Noguchi H."/>
            <person name="Totoki Y."/>
            <person name="Toyoda A."/>
            <person name="Kuroki Y."/>
            <person name="Dewar K."/>
            <person name="Lloyd C."/>
            <person name="Itoh T."/>
            <person name="Takeda T."/>
            <person name="Kim D.-W."/>
            <person name="She X."/>
            <person name="Barlow K.F."/>
            <person name="Bloom T."/>
            <person name="Bruford E."/>
            <person name="Chang J.L."/>
            <person name="Cuomo C.A."/>
            <person name="Eichler E."/>
            <person name="FitzGerald M.G."/>
            <person name="Jaffe D.B."/>
            <person name="LaButti K."/>
            <person name="Nicol R."/>
            <person name="Park H.-S."/>
            <person name="Seaman C."/>
            <person name="Sougnez C."/>
            <person name="Yang X."/>
            <person name="Zimmer A.R."/>
            <person name="Zody M.C."/>
            <person name="Birren B.W."/>
            <person name="Nusbaum C."/>
            <person name="Fujiyama A."/>
            <person name="Hattori M."/>
            <person name="Rogers J."/>
            <person name="Lander E.S."/>
            <person name="Sakaki Y."/>
        </authorList>
    </citation>
    <scope>NUCLEOTIDE SEQUENCE [LARGE SCALE GENOMIC DNA]</scope>
</reference>
<reference key="3">
    <citation type="journal article" date="2004" name="Proc. Natl. Acad. Sci. U.S.A.">
        <title>The human olfactory receptor gene family.</title>
        <authorList>
            <person name="Malnic B."/>
            <person name="Godfrey P.A."/>
            <person name="Buck L.B."/>
        </authorList>
    </citation>
    <scope>IDENTIFICATION</scope>
    <scope>VARIANTS THR-129; TYR-201 AND ALA-245</scope>
</reference>
<reference key="4">
    <citation type="journal article" date="2004" name="Proc. Natl. Acad. Sci. U.S.A.">
        <authorList>
            <person name="Malnic B."/>
            <person name="Godfrey P.A."/>
            <person name="Buck L.B."/>
        </authorList>
    </citation>
    <scope>ERRATUM OF PUBMED:14983052</scope>
</reference>
<keyword id="KW-1003">Cell membrane</keyword>
<keyword id="KW-1015">Disulfide bond</keyword>
<keyword id="KW-0297">G-protein coupled receptor</keyword>
<keyword id="KW-0325">Glycoprotein</keyword>
<keyword id="KW-0472">Membrane</keyword>
<keyword id="KW-0552">Olfaction</keyword>
<keyword id="KW-0675">Receptor</keyword>
<keyword id="KW-1185">Reference proteome</keyword>
<keyword id="KW-0716">Sensory transduction</keyword>
<keyword id="KW-0807">Transducer</keyword>
<keyword id="KW-0812">Transmembrane</keyword>
<keyword id="KW-1133">Transmembrane helix</keyword>